<reference key="1">
    <citation type="journal article" date="2008" name="PLoS Genet.">
        <title>Complete genome sequence of the N2-fixing broad host range endophyte Klebsiella pneumoniae 342 and virulence predictions verified in mice.</title>
        <authorList>
            <person name="Fouts D.E."/>
            <person name="Tyler H.L."/>
            <person name="DeBoy R.T."/>
            <person name="Daugherty S."/>
            <person name="Ren Q."/>
            <person name="Badger J.H."/>
            <person name="Durkin A.S."/>
            <person name="Huot H."/>
            <person name="Shrivastava S."/>
            <person name="Kothari S."/>
            <person name="Dodson R.J."/>
            <person name="Mohamoud Y."/>
            <person name="Khouri H."/>
            <person name="Roesch L.F.W."/>
            <person name="Krogfelt K.A."/>
            <person name="Struve C."/>
            <person name="Triplett E.W."/>
            <person name="Methe B.A."/>
        </authorList>
    </citation>
    <scope>NUCLEOTIDE SEQUENCE [LARGE SCALE GENOMIC DNA]</scope>
    <source>
        <strain>342</strain>
    </source>
</reference>
<feature type="chain" id="PRO_1000149212" description="2-isopropylmalate synthase">
    <location>
        <begin position="1"/>
        <end position="523"/>
    </location>
</feature>
<feature type="domain" description="Pyruvate carboxyltransferase" evidence="1">
    <location>
        <begin position="5"/>
        <end position="267"/>
    </location>
</feature>
<feature type="region of interest" description="Regulatory domain" evidence="1">
    <location>
        <begin position="392"/>
        <end position="523"/>
    </location>
</feature>
<feature type="binding site" evidence="1">
    <location>
        <position position="14"/>
    </location>
    <ligand>
        <name>Mn(2+)</name>
        <dbReference type="ChEBI" id="CHEBI:29035"/>
    </ligand>
</feature>
<feature type="binding site" evidence="1">
    <location>
        <position position="202"/>
    </location>
    <ligand>
        <name>Mn(2+)</name>
        <dbReference type="ChEBI" id="CHEBI:29035"/>
    </ligand>
</feature>
<feature type="binding site" evidence="1">
    <location>
        <position position="204"/>
    </location>
    <ligand>
        <name>Mn(2+)</name>
        <dbReference type="ChEBI" id="CHEBI:29035"/>
    </ligand>
</feature>
<feature type="binding site" evidence="1">
    <location>
        <position position="238"/>
    </location>
    <ligand>
        <name>Mn(2+)</name>
        <dbReference type="ChEBI" id="CHEBI:29035"/>
    </ligand>
</feature>
<sequence length="523" mass="57458">MSQQVIIFDTTLRDGEQALQASLSVKEKLQIALALERMGVDVMEVGFPVSSPGDFESVQSIARTIKNSRVCALARCVEKDIDVAAESLKVAEAFRIHTFIATSPMHIATKLRSTLDEVIERAIYMVKRARNYTDDVEFSCEDAGRTPIADLARVVEAAINAGATTINIPDTVGYTMPFEYANIISGLYDRVPNIDKAIISVHTHDDLGIAVGNALAAVHAGARQVEGAMNGIGERAGNCALEEVIMAIKVRKDIMNVHTNINHHEIWRTSQTVSQICNMPIPANKAIVGTGAFAHSSGIHQDGVLKNRENYEIMTPESIGLNQVQLNLTSRSGRAAVKHRMEEMGYQESDYNLDHLYDAFLKLADKKGQVFDYDLEALAFINKQQEEPEHFRLDYFSVQSGSSDIATASIKLVCGDEIKTEAANGNGPVDAIYQAINRVTNYNIDLVKYGLSAKGHGKDALGQVDIVVDYNGRRFHGVGLATDIVESSAKAMVHVLNNIWRAAEVEKELQRKAQNKENNKETV</sequence>
<comment type="function">
    <text evidence="1">Catalyzes the condensation of the acetyl group of acetyl-CoA with 3-methyl-2-oxobutanoate (2-ketoisovalerate) to form 3-carboxy-3-hydroxy-4-methylpentanoate (2-isopropylmalate).</text>
</comment>
<comment type="catalytic activity">
    <reaction evidence="1">
        <text>3-methyl-2-oxobutanoate + acetyl-CoA + H2O = (2S)-2-isopropylmalate + CoA + H(+)</text>
        <dbReference type="Rhea" id="RHEA:21524"/>
        <dbReference type="ChEBI" id="CHEBI:1178"/>
        <dbReference type="ChEBI" id="CHEBI:11851"/>
        <dbReference type="ChEBI" id="CHEBI:15377"/>
        <dbReference type="ChEBI" id="CHEBI:15378"/>
        <dbReference type="ChEBI" id="CHEBI:57287"/>
        <dbReference type="ChEBI" id="CHEBI:57288"/>
        <dbReference type="EC" id="2.3.3.13"/>
    </reaction>
</comment>
<comment type="cofactor">
    <cofactor evidence="1">
        <name>Mn(2+)</name>
        <dbReference type="ChEBI" id="CHEBI:29035"/>
    </cofactor>
</comment>
<comment type="pathway">
    <text evidence="1">Amino-acid biosynthesis; L-leucine biosynthesis; L-leucine from 3-methyl-2-oxobutanoate: step 1/4.</text>
</comment>
<comment type="subunit">
    <text evidence="1">Homodimer.</text>
</comment>
<comment type="subcellular location">
    <subcellularLocation>
        <location evidence="1">Cytoplasm</location>
    </subcellularLocation>
</comment>
<comment type="similarity">
    <text evidence="1">Belongs to the alpha-IPM synthase/homocitrate synthase family. LeuA type 1 subfamily.</text>
</comment>
<proteinExistence type="inferred from homology"/>
<organism>
    <name type="scientific">Klebsiella pneumoniae (strain 342)</name>
    <dbReference type="NCBI Taxonomy" id="507522"/>
    <lineage>
        <taxon>Bacteria</taxon>
        <taxon>Pseudomonadati</taxon>
        <taxon>Pseudomonadota</taxon>
        <taxon>Gammaproteobacteria</taxon>
        <taxon>Enterobacterales</taxon>
        <taxon>Enterobacteriaceae</taxon>
        <taxon>Klebsiella/Raoultella group</taxon>
        <taxon>Klebsiella</taxon>
        <taxon>Klebsiella pneumoniae complex</taxon>
    </lineage>
</organism>
<gene>
    <name evidence="1" type="primary">leuA</name>
    <name type="ordered locus">KPK_4662</name>
</gene>
<protein>
    <recommendedName>
        <fullName evidence="1">2-isopropylmalate synthase</fullName>
        <ecNumber evidence="1">2.3.3.13</ecNumber>
    </recommendedName>
    <alternativeName>
        <fullName evidence="1">Alpha-IPM synthase</fullName>
    </alternativeName>
    <alternativeName>
        <fullName evidence="1">Alpha-isopropylmalate synthase</fullName>
    </alternativeName>
</protein>
<name>LEU1_KLEP3</name>
<keyword id="KW-0028">Amino-acid biosynthesis</keyword>
<keyword id="KW-0100">Branched-chain amino acid biosynthesis</keyword>
<keyword id="KW-0963">Cytoplasm</keyword>
<keyword id="KW-0432">Leucine biosynthesis</keyword>
<keyword id="KW-0464">Manganese</keyword>
<keyword id="KW-0479">Metal-binding</keyword>
<keyword id="KW-0808">Transferase</keyword>
<dbReference type="EC" id="2.3.3.13" evidence="1"/>
<dbReference type="EMBL" id="CP000964">
    <property type="protein sequence ID" value="ACI08908.1"/>
    <property type="molecule type" value="Genomic_DNA"/>
</dbReference>
<dbReference type="SMR" id="B5Y1W2"/>
<dbReference type="KEGG" id="kpe:KPK_4662"/>
<dbReference type="HOGENOM" id="CLU_022158_0_1_6"/>
<dbReference type="UniPathway" id="UPA00048">
    <property type="reaction ID" value="UER00070"/>
</dbReference>
<dbReference type="PHI-base" id="PHI:8962"/>
<dbReference type="Proteomes" id="UP000001734">
    <property type="component" value="Chromosome"/>
</dbReference>
<dbReference type="GO" id="GO:0005829">
    <property type="term" value="C:cytosol"/>
    <property type="evidence" value="ECO:0007669"/>
    <property type="project" value="TreeGrafter"/>
</dbReference>
<dbReference type="GO" id="GO:0003852">
    <property type="term" value="F:2-isopropylmalate synthase activity"/>
    <property type="evidence" value="ECO:0007669"/>
    <property type="project" value="UniProtKB-UniRule"/>
</dbReference>
<dbReference type="GO" id="GO:0003985">
    <property type="term" value="F:acetyl-CoA C-acetyltransferase activity"/>
    <property type="evidence" value="ECO:0007669"/>
    <property type="project" value="UniProtKB-UniRule"/>
</dbReference>
<dbReference type="GO" id="GO:0030145">
    <property type="term" value="F:manganese ion binding"/>
    <property type="evidence" value="ECO:0007669"/>
    <property type="project" value="UniProtKB-UniRule"/>
</dbReference>
<dbReference type="GO" id="GO:0009098">
    <property type="term" value="P:L-leucine biosynthetic process"/>
    <property type="evidence" value="ECO:0007669"/>
    <property type="project" value="UniProtKB-UniRule"/>
</dbReference>
<dbReference type="CDD" id="cd07940">
    <property type="entry name" value="DRE_TIM_IPMS"/>
    <property type="match status" value="1"/>
</dbReference>
<dbReference type="FunFam" id="1.10.238.260:FF:000001">
    <property type="entry name" value="2-isopropylmalate synthase"/>
    <property type="match status" value="1"/>
</dbReference>
<dbReference type="FunFam" id="3.20.20.70:FF:000010">
    <property type="entry name" value="2-isopropylmalate synthase"/>
    <property type="match status" value="1"/>
</dbReference>
<dbReference type="FunFam" id="3.30.160.270:FF:000001">
    <property type="entry name" value="2-isopropylmalate synthase"/>
    <property type="match status" value="1"/>
</dbReference>
<dbReference type="Gene3D" id="1.10.238.260">
    <property type="match status" value="1"/>
</dbReference>
<dbReference type="Gene3D" id="3.30.160.270">
    <property type="match status" value="1"/>
</dbReference>
<dbReference type="Gene3D" id="3.20.20.70">
    <property type="entry name" value="Aldolase class I"/>
    <property type="match status" value="1"/>
</dbReference>
<dbReference type="HAMAP" id="MF_01025">
    <property type="entry name" value="LeuA_type1"/>
    <property type="match status" value="1"/>
</dbReference>
<dbReference type="InterPro" id="IPR050073">
    <property type="entry name" value="2-IPM_HCS-like"/>
</dbReference>
<dbReference type="InterPro" id="IPR013709">
    <property type="entry name" value="2-isopropylmalate_synth_dimer"/>
</dbReference>
<dbReference type="InterPro" id="IPR002034">
    <property type="entry name" value="AIPM/Hcit_synth_CS"/>
</dbReference>
<dbReference type="InterPro" id="IPR013785">
    <property type="entry name" value="Aldolase_TIM"/>
</dbReference>
<dbReference type="InterPro" id="IPR054691">
    <property type="entry name" value="LeuA/HCS_post-cat"/>
</dbReference>
<dbReference type="InterPro" id="IPR036230">
    <property type="entry name" value="LeuA_allosteric_dom_sf"/>
</dbReference>
<dbReference type="InterPro" id="IPR005671">
    <property type="entry name" value="LeuA_bact_synth"/>
</dbReference>
<dbReference type="InterPro" id="IPR000891">
    <property type="entry name" value="PYR_CT"/>
</dbReference>
<dbReference type="NCBIfam" id="TIGR00973">
    <property type="entry name" value="leuA_bact"/>
    <property type="match status" value="1"/>
</dbReference>
<dbReference type="NCBIfam" id="NF002084">
    <property type="entry name" value="PRK00915.1-1"/>
    <property type="match status" value="1"/>
</dbReference>
<dbReference type="NCBIfam" id="NF002086">
    <property type="entry name" value="PRK00915.1-3"/>
    <property type="match status" value="1"/>
</dbReference>
<dbReference type="PANTHER" id="PTHR10277:SF9">
    <property type="entry name" value="2-ISOPROPYLMALATE SYNTHASE 1, CHLOROPLASTIC-RELATED"/>
    <property type="match status" value="1"/>
</dbReference>
<dbReference type="PANTHER" id="PTHR10277">
    <property type="entry name" value="HOMOCITRATE SYNTHASE-RELATED"/>
    <property type="match status" value="1"/>
</dbReference>
<dbReference type="Pfam" id="PF22617">
    <property type="entry name" value="HCS_D2"/>
    <property type="match status" value="1"/>
</dbReference>
<dbReference type="Pfam" id="PF00682">
    <property type="entry name" value="HMGL-like"/>
    <property type="match status" value="1"/>
</dbReference>
<dbReference type="Pfam" id="PF08502">
    <property type="entry name" value="LeuA_dimer"/>
    <property type="match status" value="1"/>
</dbReference>
<dbReference type="SMART" id="SM00917">
    <property type="entry name" value="LeuA_dimer"/>
    <property type="match status" value="1"/>
</dbReference>
<dbReference type="SUPFAM" id="SSF110921">
    <property type="entry name" value="2-isopropylmalate synthase LeuA, allosteric (dimerisation) domain"/>
    <property type="match status" value="1"/>
</dbReference>
<dbReference type="SUPFAM" id="SSF51569">
    <property type="entry name" value="Aldolase"/>
    <property type="match status" value="1"/>
</dbReference>
<dbReference type="PROSITE" id="PS00815">
    <property type="entry name" value="AIPM_HOMOCIT_SYNTH_1"/>
    <property type="match status" value="1"/>
</dbReference>
<dbReference type="PROSITE" id="PS00816">
    <property type="entry name" value="AIPM_HOMOCIT_SYNTH_2"/>
    <property type="match status" value="1"/>
</dbReference>
<dbReference type="PROSITE" id="PS50991">
    <property type="entry name" value="PYR_CT"/>
    <property type="match status" value="1"/>
</dbReference>
<evidence type="ECO:0000255" key="1">
    <source>
        <dbReference type="HAMAP-Rule" id="MF_01025"/>
    </source>
</evidence>
<accession>B5Y1W2</accession>